<dbReference type="EMBL" id="U47323">
    <property type="protein sequence ID" value="AAC52715.1"/>
    <property type="molecule type" value="mRNA"/>
</dbReference>
<dbReference type="EMBL" id="AK041944">
    <property type="protein sequence ID" value="BAC31106.1"/>
    <property type="molecule type" value="mRNA"/>
</dbReference>
<dbReference type="EMBL" id="CH466531">
    <property type="protein sequence ID" value="EDL16597.1"/>
    <property type="molecule type" value="Genomic_DNA"/>
</dbReference>
<dbReference type="EMBL" id="BC021644">
    <property type="protein sequence ID" value="AAH21644.1"/>
    <property type="molecule type" value="mRNA"/>
</dbReference>
<dbReference type="CCDS" id="CCDS21530.1"/>
<dbReference type="RefSeq" id="NP_033313.2">
    <property type="nucleotide sequence ID" value="NM_009287.4"/>
</dbReference>
<dbReference type="SMR" id="P70302"/>
<dbReference type="BioGRID" id="203538">
    <property type="interactions" value="13"/>
</dbReference>
<dbReference type="DIP" id="DIP-48770N"/>
<dbReference type="FunCoup" id="P70302">
    <property type="interactions" value="2082"/>
</dbReference>
<dbReference type="IntAct" id="P70302">
    <property type="interactions" value="1"/>
</dbReference>
<dbReference type="STRING" id="10090.ENSMUSP00000033289"/>
<dbReference type="ChEMBL" id="CHEMBL4296085"/>
<dbReference type="GlyConnect" id="2741">
    <property type="glycosylation" value="4 N-Linked glycans (1 site)"/>
</dbReference>
<dbReference type="GlyCosmos" id="P70302">
    <property type="glycosylation" value="2 sites, 4 glycans"/>
</dbReference>
<dbReference type="GlyGen" id="P70302">
    <property type="glycosylation" value="8 sites, 7 N-linked glycans (3 sites), 1 O-linked glycan (4 sites)"/>
</dbReference>
<dbReference type="iPTMnet" id="P70302"/>
<dbReference type="PhosphoSitePlus" id="P70302"/>
<dbReference type="SwissPalm" id="P70302"/>
<dbReference type="jPOST" id="P70302"/>
<dbReference type="PaxDb" id="10090-ENSMUSP00000033289"/>
<dbReference type="PeptideAtlas" id="P70302"/>
<dbReference type="ProteomicsDB" id="257091"/>
<dbReference type="Pumba" id="P70302"/>
<dbReference type="Antibodypedia" id="2591">
    <property type="antibodies" value="554 antibodies from 44 providers"/>
</dbReference>
<dbReference type="DNASU" id="20866"/>
<dbReference type="Ensembl" id="ENSMUST00000033289.6">
    <property type="protein sequence ID" value="ENSMUSP00000033289.5"/>
    <property type="gene ID" value="ENSMUSG00000030987.6"/>
</dbReference>
<dbReference type="GeneID" id="20866"/>
<dbReference type="KEGG" id="mmu:20866"/>
<dbReference type="UCSC" id="uc009irm.1">
    <property type="organism name" value="mouse"/>
</dbReference>
<dbReference type="AGR" id="MGI:107476"/>
<dbReference type="CTD" id="6786"/>
<dbReference type="MGI" id="MGI:107476">
    <property type="gene designation" value="Stim1"/>
</dbReference>
<dbReference type="VEuPathDB" id="HostDB:ENSMUSG00000030987"/>
<dbReference type="eggNOG" id="KOG4403">
    <property type="taxonomic scope" value="Eukaryota"/>
</dbReference>
<dbReference type="GeneTree" id="ENSGT00390000000214"/>
<dbReference type="HOGENOM" id="CLU_010588_0_0_1"/>
<dbReference type="InParanoid" id="P70302"/>
<dbReference type="OMA" id="FLCCVLK"/>
<dbReference type="PhylomeDB" id="P70302"/>
<dbReference type="TreeFam" id="TF313487"/>
<dbReference type="Reactome" id="R-MMU-5578775">
    <property type="pathway name" value="Ion homeostasis"/>
</dbReference>
<dbReference type="Reactome" id="R-MMU-983695">
    <property type="pathway name" value="Antigen activates B Cell Receptor (BCR) leading to generation of second messengers"/>
</dbReference>
<dbReference type="BioGRID-ORCS" id="20866">
    <property type="hits" value="4 hits in 79 CRISPR screens"/>
</dbReference>
<dbReference type="ChiTaRS" id="Stim1">
    <property type="organism name" value="mouse"/>
</dbReference>
<dbReference type="PRO" id="PR:P70302"/>
<dbReference type="Proteomes" id="UP000000589">
    <property type="component" value="Chromosome 7"/>
</dbReference>
<dbReference type="RNAct" id="P70302">
    <property type="molecule type" value="protein"/>
</dbReference>
<dbReference type="Bgee" id="ENSMUSG00000030987">
    <property type="expression patterns" value="Expressed in extra-ocular muscle and 229 other cell types or tissues"/>
</dbReference>
<dbReference type="ExpressionAtlas" id="P70302">
    <property type="expression patterns" value="baseline and differential"/>
</dbReference>
<dbReference type="GO" id="GO:0005783">
    <property type="term" value="C:endoplasmic reticulum"/>
    <property type="evidence" value="ECO:0000314"/>
    <property type="project" value="MGI"/>
</dbReference>
<dbReference type="GO" id="GO:0005789">
    <property type="term" value="C:endoplasmic reticulum membrane"/>
    <property type="evidence" value="ECO:0000250"/>
    <property type="project" value="UniProtKB"/>
</dbReference>
<dbReference type="GO" id="GO:0005874">
    <property type="term" value="C:microtubule"/>
    <property type="evidence" value="ECO:0007669"/>
    <property type="project" value="UniProtKB-KW"/>
</dbReference>
<dbReference type="GO" id="GO:0005886">
    <property type="term" value="C:plasma membrane"/>
    <property type="evidence" value="ECO:0000314"/>
    <property type="project" value="MGI"/>
</dbReference>
<dbReference type="GO" id="GO:0044853">
    <property type="term" value="C:plasma membrane raft"/>
    <property type="evidence" value="ECO:0000250"/>
    <property type="project" value="UniProtKB"/>
</dbReference>
<dbReference type="GO" id="GO:0033017">
    <property type="term" value="C:sarcoplasmic reticulum membrane"/>
    <property type="evidence" value="ECO:0000250"/>
    <property type="project" value="UniProtKB"/>
</dbReference>
<dbReference type="GO" id="GO:0045202">
    <property type="term" value="C:synapse"/>
    <property type="evidence" value="ECO:0007669"/>
    <property type="project" value="GOC"/>
</dbReference>
<dbReference type="GO" id="GO:0005246">
    <property type="term" value="F:calcium channel regulator activity"/>
    <property type="evidence" value="ECO:0000314"/>
    <property type="project" value="MGI"/>
</dbReference>
<dbReference type="GO" id="GO:0005509">
    <property type="term" value="F:calcium ion binding"/>
    <property type="evidence" value="ECO:0000250"/>
    <property type="project" value="UniProtKB"/>
</dbReference>
<dbReference type="GO" id="GO:0099103">
    <property type="term" value="F:channel activator activity"/>
    <property type="evidence" value="ECO:0000314"/>
    <property type="project" value="MGI"/>
</dbReference>
<dbReference type="GO" id="GO:0042802">
    <property type="term" value="F:identical protein binding"/>
    <property type="evidence" value="ECO:0000353"/>
    <property type="project" value="IntAct"/>
</dbReference>
<dbReference type="GO" id="GO:0099107">
    <property type="term" value="F:ion channel regulator activity involved in G protein-coupled receptor signaling pathway"/>
    <property type="evidence" value="ECO:0000314"/>
    <property type="project" value="MGI"/>
</dbReference>
<dbReference type="GO" id="GO:0051010">
    <property type="term" value="F:microtubule plus-end binding"/>
    <property type="evidence" value="ECO:0000250"/>
    <property type="project" value="UniProtKB"/>
</dbReference>
<dbReference type="GO" id="GO:0032237">
    <property type="term" value="P:activation of store-operated calcium channel activity"/>
    <property type="evidence" value="ECO:0000250"/>
    <property type="project" value="UniProtKB"/>
</dbReference>
<dbReference type="GO" id="GO:0005513">
    <property type="term" value="P:detection of calcium ion"/>
    <property type="evidence" value="ECO:0000250"/>
    <property type="project" value="UniProtKB"/>
</dbReference>
<dbReference type="GO" id="GO:0070166">
    <property type="term" value="P:enamel mineralization"/>
    <property type="evidence" value="ECO:0000250"/>
    <property type="project" value="UniProtKB"/>
</dbReference>
<dbReference type="GO" id="GO:0051649">
    <property type="term" value="P:establishment of localization in cell"/>
    <property type="evidence" value="ECO:0000315"/>
    <property type="project" value="MGI"/>
</dbReference>
<dbReference type="GO" id="GO:1990806">
    <property type="term" value="P:ligand-gated ion channel signaling pathway"/>
    <property type="evidence" value="ECO:0000314"/>
    <property type="project" value="MGI"/>
</dbReference>
<dbReference type="GO" id="GO:0006812">
    <property type="term" value="P:monoatomic cation transport"/>
    <property type="evidence" value="ECO:0000315"/>
    <property type="project" value="MGI"/>
</dbReference>
<dbReference type="GO" id="GO:0014902">
    <property type="term" value="P:myotube differentiation"/>
    <property type="evidence" value="ECO:0000315"/>
    <property type="project" value="MGI"/>
</dbReference>
<dbReference type="GO" id="GO:0007207">
    <property type="term" value="P:phospholipase C-activating G protein-coupled acetylcholine receptor signaling pathway"/>
    <property type="evidence" value="ECO:0000314"/>
    <property type="project" value="MGI"/>
</dbReference>
<dbReference type="GO" id="GO:0007200">
    <property type="term" value="P:phospholipase C-activating G protein-coupled receptor signaling pathway"/>
    <property type="evidence" value="ECO:0000315"/>
    <property type="project" value="MGI"/>
</dbReference>
<dbReference type="GO" id="GO:0045762">
    <property type="term" value="P:positive regulation of adenylate cyclase activity"/>
    <property type="evidence" value="ECO:0000250"/>
    <property type="project" value="UniProtKB"/>
</dbReference>
<dbReference type="GO" id="GO:0032024">
    <property type="term" value="P:positive regulation of insulin secretion"/>
    <property type="evidence" value="ECO:0000314"/>
    <property type="project" value="MGI"/>
</dbReference>
<dbReference type="GO" id="GO:0051924">
    <property type="term" value="P:regulation of calcium ion transport"/>
    <property type="evidence" value="ECO:0000250"/>
    <property type="project" value="UniProtKB"/>
</dbReference>
<dbReference type="GO" id="GO:2001256">
    <property type="term" value="P:regulation of store-operated calcium entry"/>
    <property type="evidence" value="ECO:0000250"/>
    <property type="project" value="UniProtKB"/>
</dbReference>
<dbReference type="GO" id="GO:0002115">
    <property type="term" value="P:store-operated calcium entry"/>
    <property type="evidence" value="ECO:0000315"/>
    <property type="project" value="MGI"/>
</dbReference>
<dbReference type="CDD" id="cd09573">
    <property type="entry name" value="SAM_STIM1"/>
    <property type="match status" value="1"/>
</dbReference>
<dbReference type="CDD" id="cd11722">
    <property type="entry name" value="SOAR"/>
    <property type="match status" value="1"/>
</dbReference>
<dbReference type="FunFam" id="1.10.150.50:FF:000009">
    <property type="entry name" value="Stromal interaction molecule 1"/>
    <property type="match status" value="1"/>
</dbReference>
<dbReference type="FunFam" id="1.10.238.180:FF:000001">
    <property type="entry name" value="Stromal interaction molecule 1"/>
    <property type="match status" value="1"/>
</dbReference>
<dbReference type="FunFam" id="1.10.287.3550:FF:000001">
    <property type="entry name" value="Stromal interaction molecule 1"/>
    <property type="match status" value="1"/>
</dbReference>
<dbReference type="FunFam" id="1.20.5.340:FF:000011">
    <property type="entry name" value="Stromal interaction molecule 1"/>
    <property type="match status" value="1"/>
</dbReference>
<dbReference type="Gene3D" id="1.10.238.180">
    <property type="match status" value="1"/>
</dbReference>
<dbReference type="Gene3D" id="1.10.287.3550">
    <property type="match status" value="1"/>
</dbReference>
<dbReference type="Gene3D" id="1.20.5.340">
    <property type="match status" value="1"/>
</dbReference>
<dbReference type="Gene3D" id="1.10.150.50">
    <property type="entry name" value="Transcription Factor, Ets-1"/>
    <property type="match status" value="1"/>
</dbReference>
<dbReference type="InterPro" id="IPR001660">
    <property type="entry name" value="SAM"/>
</dbReference>
<dbReference type="InterPro" id="IPR013761">
    <property type="entry name" value="SAM/pointed_sf"/>
</dbReference>
<dbReference type="InterPro" id="IPR032393">
    <property type="entry name" value="SOAR"/>
</dbReference>
<dbReference type="InterPro" id="IPR037608">
    <property type="entry name" value="STIM"/>
</dbReference>
<dbReference type="InterPro" id="IPR037609">
    <property type="entry name" value="STIM1_SAM"/>
</dbReference>
<dbReference type="PANTHER" id="PTHR15136:SF9">
    <property type="entry name" value="STROMAL INTERACTION MOLECULE 1"/>
    <property type="match status" value="1"/>
</dbReference>
<dbReference type="PANTHER" id="PTHR15136">
    <property type="entry name" value="STROMAL INTERACTION MOLECULE HOMOLOG"/>
    <property type="match status" value="1"/>
</dbReference>
<dbReference type="Pfam" id="PF07647">
    <property type="entry name" value="SAM_2"/>
    <property type="match status" value="1"/>
</dbReference>
<dbReference type="Pfam" id="PF16533">
    <property type="entry name" value="SOAR"/>
    <property type="match status" value="1"/>
</dbReference>
<dbReference type="SMART" id="SM00454">
    <property type="entry name" value="SAM"/>
    <property type="match status" value="1"/>
</dbReference>
<dbReference type="SUPFAM" id="SSF47769">
    <property type="entry name" value="SAM/Pointed domain"/>
    <property type="match status" value="1"/>
</dbReference>
<dbReference type="PROSITE" id="PS50105">
    <property type="entry name" value="SAM_DOMAIN"/>
    <property type="match status" value="1"/>
</dbReference>
<keyword id="KW-0106">Calcium</keyword>
<keyword id="KW-0109">Calcium transport</keyword>
<keyword id="KW-1003">Cell membrane</keyword>
<keyword id="KW-0175">Coiled coil</keyword>
<keyword id="KW-0963">Cytoplasm</keyword>
<keyword id="KW-0206">Cytoskeleton</keyword>
<keyword id="KW-0256">Endoplasmic reticulum</keyword>
<keyword id="KW-0325">Glycoprotein</keyword>
<keyword id="KW-0406">Ion transport</keyword>
<keyword id="KW-0472">Membrane</keyword>
<keyword id="KW-0479">Metal-binding</keyword>
<keyword id="KW-0493">Microtubule</keyword>
<keyword id="KW-0597">Phosphoprotein</keyword>
<keyword id="KW-1185">Reference proteome</keyword>
<keyword id="KW-0703">Sarcoplasmic reticulum</keyword>
<keyword id="KW-0732">Signal</keyword>
<keyword id="KW-0812">Transmembrane</keyword>
<keyword id="KW-1133">Transmembrane helix</keyword>
<keyword id="KW-0813">Transport</keyword>
<evidence type="ECO:0000250" key="1">
    <source>
        <dbReference type="UniProtKB" id="Q13586"/>
    </source>
</evidence>
<evidence type="ECO:0000255" key="2"/>
<evidence type="ECO:0000255" key="3">
    <source>
        <dbReference type="PROSITE-ProRule" id="PRU00184"/>
    </source>
</evidence>
<evidence type="ECO:0000256" key="4">
    <source>
        <dbReference type="SAM" id="MobiDB-lite"/>
    </source>
</evidence>
<evidence type="ECO:0000269" key="5">
    <source>
    </source>
</evidence>
<evidence type="ECO:0000269" key="6">
    <source>
    </source>
</evidence>
<evidence type="ECO:0000269" key="7">
    <source>
    </source>
</evidence>
<evidence type="ECO:0000269" key="8">
    <source>
    </source>
</evidence>
<evidence type="ECO:0000305" key="9"/>
<evidence type="ECO:0007744" key="10">
    <source>
    </source>
</evidence>
<evidence type="ECO:0007744" key="11">
    <source>
    </source>
</evidence>
<evidence type="ECO:0007744" key="12">
    <source>
    </source>
</evidence>
<sequence>MDVCARLALWLLWGLLLHQGQSLSHSHSEKNTGASSGATSEESTEAEFCRIDKPLCHSEDEKLSFEAVRNIHKLMDDDANGDVDVEESDEFLREDLNYHDPTVKHSTFHGEDKLISVEDLWKAWKSSEVYNWTVDEVIQWLITYVELPQYEETFRKLQLTGHAMPRLAVTNTTMTGTVLKMTDRSHRQKLQLKALDTVLFGPPLLTRHNHLKDFMLVVSIVIGVGGCWFAYIQNRYSKEHMKKMMKDLEGLHRAEQSLHDLQERLHKAQEEHRTVEVEKVHLEKKLRDEINLAKQEAQRLKELREGTENERSRQKYAEEELEQVREALRKAEKELESHSSWYAPEALQKWLQLTHEVEVQYYNIKKQNAERQLLVAKEGAEKIKKKRNTLFGTFHVAHSSSLDDVDHKILTAKQALSEVTAALRERLHRWQQIEILCGFQIVNNPGIHSLVAALNIDPSWMGSTRPNPAHFIMTDDVDDMDEEIVSPLSMQSPSLQSSVRQRLTEPQLGLGSQRDLTHSDSESSLHMSDRQRVAPKPPQMGRAADEALNAMPSNGSHRLIEGVHPGSLVEKLPDSPALAKKTFMALNHGLDKAHSLMELNPSVPPGGSPLLDSSHSLSPSSPDPDTPSPVGDNRALQGSRNTRIPHLAGKKAMAEEDNGSIGEETDSSPGRKKFPLKIFKKPLKK</sequence>
<comment type="function">
    <text evidence="1">Acts as a Ca(2+) sensor that gates two major inward rectifying Ca(2+) channels at the plasma membrane: Ca(2+) release-activated Ca(2+) (CRAC) channels and arachidonate-regulated Ca(2+)-selective (ARC) channels (By similarity). Plays a role in mediating store-operated Ca(2+) entry (SOCE), a Ca(2+) influx following depletion of intracellular Ca(2+) stores. Upon Ca(2+) depletion, translocates from the endoplasmic reticulum to the plasma membrane where it activates CRAC channel pore-forming subunits ORA1, ORA2 and ORAI3 to generate sustained and oscillatory Ca(2+) entry (By similarity). Involved in enamel formation (By similarity).</text>
</comment>
<comment type="subunit">
    <text evidence="1 6 7">Monomer in the presence of Ca(2+). It oligomerizes in absence of Ca(2+). Forms homooligomers and heterooligomers with STIM2. Interacts with pore-forming subunits of CRAC channels, ORAI1, ORAI2 and ORAI3; this interaction is potentiated upon Ca(2+) store depletion. Interacts (via the transmembrane region and the SOAR/CAD domain) with SPPL3; the interaction promotes the binding of STIM1 to ORAI1. Interacts with ORAI1. Interacts with MAPRE1; probably required for targeting to the growing microtubule plus ends. Interacts with CRACR2A/EFCAB4B; the interaction is direct and takes place in absence of Ca(2+). Forms a complex with CRACR2A/EFCAB4B and ORAI1 at low concentration of Ca(2+), the complex dissociates at elevated Ca(2+) concentrations. Interacts with SARAF, promoting a slow inactivation of STIM1-dependent SOCE activity, possibly by facilitating the deoligomerization of STIM1 (By similarity). Interacts with EFHB; the interaction takes place upon Ca(2+)-store depletion and inhibits the association with SARAF (By similarity). Interacts with ASPH. Interacts with SLC35G1; intracellular Ca(2+)-dependent. May interact with ATP1A1, ATP2A2, ATP2B1, ATP2B4, KPNB1 and XPO1; through SLC35G1. Interacts with STIMATE, promoting STIM1 conformational switch (By similarity). Interacts with TMEM178A (PubMed:26644563). Interacts with CASQ1 (via C-terminal end and preferentially with the monomeric form); this interaction increases in response to a depletion of intracellular Ca(2+), decreases both STIM1 aggregation and clustering, interaction of STIM1 with ORAI1 and store-operated Ca(2+) entry (SOCE) activity (By similarity). Interacts with ADCY8 (By similarity). Interacts with TMEM203 (PubMed:31346090).</text>
</comment>
<comment type="interaction">
    <interactant intactId="EBI-8402335">
        <id>P70302</id>
    </interactant>
    <interactant intactId="EBI-8402335">
        <id>P70302</id>
        <label>Stim1</label>
    </interactant>
    <organismsDiffer>false</organismsDiffer>
    <experiments>2</experiments>
</comment>
<comment type="subcellular location">
    <subcellularLocation>
        <location evidence="1">Cell membrane</location>
        <topology evidence="1">Single-pass type I membrane protein</topology>
    </subcellularLocation>
    <subcellularLocation>
        <location evidence="1">Endoplasmic reticulum membrane</location>
        <topology evidence="1">Single-pass type I membrane protein</topology>
    </subcellularLocation>
    <subcellularLocation>
        <location evidence="1">Sarcoplasmic reticulum</location>
    </subcellularLocation>
    <subcellularLocation>
        <location evidence="1">Cytoplasm</location>
        <location evidence="1">Cytoskeleton</location>
    </subcellularLocation>
    <text evidence="1">Translocates from the endoplasmic reticulum to the cell membrane in response to a depletion of intracellular Ca(2+) and is detected at punctae corresponding to junctions between the endoplasmic reticulum and the cell membrane. Associated with the microtubule network at the growing distal tip of microtubules. Colocalizes with ORAI1 at the cell membrane. Colocalizes preferentially with CASQ1 at endoplasmic reticulum in response to a depletion of intracellular calcium (By similarity).</text>
</comment>
<comment type="tissue specificity">
    <text evidence="5 8">Expressed in maturation-stage ameloblasts (at protein level). Expressed in all tissues examined and in many cell types, including bone marrow stroma, fibroblast, B-cell precursors, lymphoma and erythroleukemia.</text>
</comment>
<comment type="domain">
    <text evidence="1">The microtubule tip localization signal (MtLS) motif; mediates interaction with MAPRE1 and targeting to the growing microtubule plus ends.</text>
</comment>
<comment type="domain">
    <text evidence="1">The EF-hand domain is responsible for Ca(2+) sensitivity. It consists of a canonical helix-loop-helix EF motif (alpha1beta1alpha2; EF-hand 1) paired to a second helix-loop-helix EF motif (alpha3beta2alpha4; EF-hand 2). EF-hand 1 binds Ca(2+) whereas EF-hand 2 mediates the interactions with SAM domain.</text>
</comment>
<comment type="domain">
    <text evidence="1">The sterile alpha motif (SAM) domain folds into a characteristic 5-helix bundle (alpha6-alpha10) which interacts with the EF-hand pairs enabling concerted folding and stability of EF-hand and SAM domains.</text>
</comment>
<comment type="domain">
    <text evidence="1">The STIM1 Orai-activating region/CRAC-activating domain (SOAR/CAD) directly interacts with ORAI1 subunits and mediates CRAC channel gating.</text>
</comment>
<comment type="domain">
    <text evidence="1">The polybasic Lys-rich region (residues 672-685) functionally interacts with the Pro-rich region of ORAI1 (residues 3-47) and regulates CRAC channel gating at negative membrane potentials.</text>
</comment>
<comment type="PTM">
    <text evidence="1">Glycosylation is required for cell surface expression.</text>
</comment>
<comment type="PTM">
    <text evidence="1">Phosphorylated predominantly on Ser residues.</text>
</comment>
<organism>
    <name type="scientific">Mus musculus</name>
    <name type="common">Mouse</name>
    <dbReference type="NCBI Taxonomy" id="10090"/>
    <lineage>
        <taxon>Eukaryota</taxon>
        <taxon>Metazoa</taxon>
        <taxon>Chordata</taxon>
        <taxon>Craniata</taxon>
        <taxon>Vertebrata</taxon>
        <taxon>Euteleostomi</taxon>
        <taxon>Mammalia</taxon>
        <taxon>Eutheria</taxon>
        <taxon>Euarchontoglires</taxon>
        <taxon>Glires</taxon>
        <taxon>Rodentia</taxon>
        <taxon>Myomorpha</taxon>
        <taxon>Muroidea</taxon>
        <taxon>Muridae</taxon>
        <taxon>Murinae</taxon>
        <taxon>Mus</taxon>
        <taxon>Mus</taxon>
    </lineage>
</organism>
<reference key="1">
    <citation type="journal article" date="1996" name="J. Cell Biol.">
        <title>Identification of stromal cell products that interact with pre-B cells.</title>
        <authorList>
            <person name="Oritani K."/>
            <person name="Kincade P.W."/>
        </authorList>
    </citation>
    <scope>NUCLEOTIDE SEQUENCE [MRNA]</scope>
    <scope>SUBCELLULAR LOCATION</scope>
    <scope>TISSUE SPECIFICITY</scope>
    <source>
        <strain>C57BL/6 X DBA/2</strain>
        <tissue>Bone marrow stroma</tissue>
    </source>
</reference>
<reference key="2">
    <citation type="journal article" date="2005" name="Science">
        <title>The transcriptional landscape of the mammalian genome.</title>
        <authorList>
            <person name="Carninci P."/>
            <person name="Kasukawa T."/>
            <person name="Katayama S."/>
            <person name="Gough J."/>
            <person name="Frith M.C."/>
            <person name="Maeda N."/>
            <person name="Oyama R."/>
            <person name="Ravasi T."/>
            <person name="Lenhard B."/>
            <person name="Wells C."/>
            <person name="Kodzius R."/>
            <person name="Shimokawa K."/>
            <person name="Bajic V.B."/>
            <person name="Brenner S.E."/>
            <person name="Batalov S."/>
            <person name="Forrest A.R."/>
            <person name="Zavolan M."/>
            <person name="Davis M.J."/>
            <person name="Wilming L.G."/>
            <person name="Aidinis V."/>
            <person name="Allen J.E."/>
            <person name="Ambesi-Impiombato A."/>
            <person name="Apweiler R."/>
            <person name="Aturaliya R.N."/>
            <person name="Bailey T.L."/>
            <person name="Bansal M."/>
            <person name="Baxter L."/>
            <person name="Beisel K.W."/>
            <person name="Bersano T."/>
            <person name="Bono H."/>
            <person name="Chalk A.M."/>
            <person name="Chiu K.P."/>
            <person name="Choudhary V."/>
            <person name="Christoffels A."/>
            <person name="Clutterbuck D.R."/>
            <person name="Crowe M.L."/>
            <person name="Dalla E."/>
            <person name="Dalrymple B.P."/>
            <person name="de Bono B."/>
            <person name="Della Gatta G."/>
            <person name="di Bernardo D."/>
            <person name="Down T."/>
            <person name="Engstrom P."/>
            <person name="Fagiolini M."/>
            <person name="Faulkner G."/>
            <person name="Fletcher C.F."/>
            <person name="Fukushima T."/>
            <person name="Furuno M."/>
            <person name="Futaki S."/>
            <person name="Gariboldi M."/>
            <person name="Georgii-Hemming P."/>
            <person name="Gingeras T.R."/>
            <person name="Gojobori T."/>
            <person name="Green R.E."/>
            <person name="Gustincich S."/>
            <person name="Harbers M."/>
            <person name="Hayashi Y."/>
            <person name="Hensch T.K."/>
            <person name="Hirokawa N."/>
            <person name="Hill D."/>
            <person name="Huminiecki L."/>
            <person name="Iacono M."/>
            <person name="Ikeo K."/>
            <person name="Iwama A."/>
            <person name="Ishikawa T."/>
            <person name="Jakt M."/>
            <person name="Kanapin A."/>
            <person name="Katoh M."/>
            <person name="Kawasawa Y."/>
            <person name="Kelso J."/>
            <person name="Kitamura H."/>
            <person name="Kitano H."/>
            <person name="Kollias G."/>
            <person name="Krishnan S.P."/>
            <person name="Kruger A."/>
            <person name="Kummerfeld S.K."/>
            <person name="Kurochkin I.V."/>
            <person name="Lareau L.F."/>
            <person name="Lazarevic D."/>
            <person name="Lipovich L."/>
            <person name="Liu J."/>
            <person name="Liuni S."/>
            <person name="McWilliam S."/>
            <person name="Madan Babu M."/>
            <person name="Madera M."/>
            <person name="Marchionni L."/>
            <person name="Matsuda H."/>
            <person name="Matsuzawa S."/>
            <person name="Miki H."/>
            <person name="Mignone F."/>
            <person name="Miyake S."/>
            <person name="Morris K."/>
            <person name="Mottagui-Tabar S."/>
            <person name="Mulder N."/>
            <person name="Nakano N."/>
            <person name="Nakauchi H."/>
            <person name="Ng P."/>
            <person name="Nilsson R."/>
            <person name="Nishiguchi S."/>
            <person name="Nishikawa S."/>
            <person name="Nori F."/>
            <person name="Ohara O."/>
            <person name="Okazaki Y."/>
            <person name="Orlando V."/>
            <person name="Pang K.C."/>
            <person name="Pavan W.J."/>
            <person name="Pavesi G."/>
            <person name="Pesole G."/>
            <person name="Petrovsky N."/>
            <person name="Piazza S."/>
            <person name="Reed J."/>
            <person name="Reid J.F."/>
            <person name="Ring B.Z."/>
            <person name="Ringwald M."/>
            <person name="Rost B."/>
            <person name="Ruan Y."/>
            <person name="Salzberg S.L."/>
            <person name="Sandelin A."/>
            <person name="Schneider C."/>
            <person name="Schoenbach C."/>
            <person name="Sekiguchi K."/>
            <person name="Semple C.A."/>
            <person name="Seno S."/>
            <person name="Sessa L."/>
            <person name="Sheng Y."/>
            <person name="Shibata Y."/>
            <person name="Shimada H."/>
            <person name="Shimada K."/>
            <person name="Silva D."/>
            <person name="Sinclair B."/>
            <person name="Sperling S."/>
            <person name="Stupka E."/>
            <person name="Sugiura K."/>
            <person name="Sultana R."/>
            <person name="Takenaka Y."/>
            <person name="Taki K."/>
            <person name="Tammoja K."/>
            <person name="Tan S.L."/>
            <person name="Tang S."/>
            <person name="Taylor M.S."/>
            <person name="Tegner J."/>
            <person name="Teichmann S.A."/>
            <person name="Ueda H.R."/>
            <person name="van Nimwegen E."/>
            <person name="Verardo R."/>
            <person name="Wei C.L."/>
            <person name="Yagi K."/>
            <person name="Yamanishi H."/>
            <person name="Zabarovsky E."/>
            <person name="Zhu S."/>
            <person name="Zimmer A."/>
            <person name="Hide W."/>
            <person name="Bult C."/>
            <person name="Grimmond S.M."/>
            <person name="Teasdale R.D."/>
            <person name="Liu E.T."/>
            <person name="Brusic V."/>
            <person name="Quackenbush J."/>
            <person name="Wahlestedt C."/>
            <person name="Mattick J.S."/>
            <person name="Hume D.A."/>
            <person name="Kai C."/>
            <person name="Sasaki D."/>
            <person name="Tomaru Y."/>
            <person name="Fukuda S."/>
            <person name="Kanamori-Katayama M."/>
            <person name="Suzuki M."/>
            <person name="Aoki J."/>
            <person name="Arakawa T."/>
            <person name="Iida J."/>
            <person name="Imamura K."/>
            <person name="Itoh M."/>
            <person name="Kato T."/>
            <person name="Kawaji H."/>
            <person name="Kawagashira N."/>
            <person name="Kawashima T."/>
            <person name="Kojima M."/>
            <person name="Kondo S."/>
            <person name="Konno H."/>
            <person name="Nakano K."/>
            <person name="Ninomiya N."/>
            <person name="Nishio T."/>
            <person name="Okada M."/>
            <person name="Plessy C."/>
            <person name="Shibata K."/>
            <person name="Shiraki T."/>
            <person name="Suzuki S."/>
            <person name="Tagami M."/>
            <person name="Waki K."/>
            <person name="Watahiki A."/>
            <person name="Okamura-Oho Y."/>
            <person name="Suzuki H."/>
            <person name="Kawai J."/>
            <person name="Hayashizaki Y."/>
        </authorList>
    </citation>
    <scope>NUCLEOTIDE SEQUENCE [LARGE SCALE MRNA]</scope>
    <source>
        <strain>C57BL/6J</strain>
        <tissue>Thymus</tissue>
    </source>
</reference>
<reference key="3">
    <citation type="submission" date="2005-07" db="EMBL/GenBank/DDBJ databases">
        <authorList>
            <person name="Mural R.J."/>
            <person name="Adams M.D."/>
            <person name="Myers E.W."/>
            <person name="Smith H.O."/>
            <person name="Venter J.C."/>
        </authorList>
    </citation>
    <scope>NUCLEOTIDE SEQUENCE [LARGE SCALE GENOMIC DNA]</scope>
</reference>
<reference key="4">
    <citation type="journal article" date="2004" name="Genome Res.">
        <title>The status, quality, and expansion of the NIH full-length cDNA project: the Mammalian Gene Collection (MGC).</title>
        <authorList>
            <consortium name="The MGC Project Team"/>
        </authorList>
    </citation>
    <scope>NUCLEOTIDE SEQUENCE [LARGE SCALE MRNA]</scope>
    <source>
        <strain>FVB/N</strain>
        <tissue>Salivary gland</tissue>
    </source>
</reference>
<reference key="5">
    <citation type="journal article" date="2007" name="Mol. Cell. Proteomics">
        <title>Mitochondrial phosphoproteome revealed by an improved IMAC method and MS/MS/MS.</title>
        <authorList>
            <person name="Lee J."/>
            <person name="Xu Y."/>
            <person name="Chen Y."/>
            <person name="Sprung R."/>
            <person name="Kim S.C."/>
            <person name="Xie S."/>
            <person name="Zhao Y."/>
        </authorList>
    </citation>
    <scope>PHOSPHORYLATION [LARGE SCALE ANALYSIS] AT SER-257</scope>
    <scope>IDENTIFICATION BY MASS SPECTROMETRY [LARGE SCALE ANALYSIS]</scope>
    <source>
        <tissue>Liver</tissue>
    </source>
</reference>
<reference key="6">
    <citation type="journal article" date="2007" name="Proc. Natl. Acad. Sci. U.S.A.">
        <title>Large-scale phosphorylation analysis of mouse liver.</title>
        <authorList>
            <person name="Villen J."/>
            <person name="Beausoleil S.A."/>
            <person name="Gerber S.A."/>
            <person name="Gygi S.P."/>
        </authorList>
    </citation>
    <scope>PHOSPHORYLATION [LARGE SCALE ANALYSIS] AT THR-504; SER-512 AND SER-575</scope>
    <scope>IDENTIFICATION BY MASS SPECTROMETRY [LARGE SCALE ANALYSIS]</scope>
    <source>
        <tissue>Liver</tissue>
    </source>
</reference>
<reference key="7">
    <citation type="journal article" date="2010" name="Cell">
        <title>A tissue-specific atlas of mouse protein phosphorylation and expression.</title>
        <authorList>
            <person name="Huttlin E.L."/>
            <person name="Jedrychowski M.P."/>
            <person name="Elias J.E."/>
            <person name="Goswami T."/>
            <person name="Rad R."/>
            <person name="Beausoleil S.A."/>
            <person name="Villen J."/>
            <person name="Haas W."/>
            <person name="Sowa M.E."/>
            <person name="Gygi S.P."/>
        </authorList>
    </citation>
    <scope>PHOSPHORYLATION [LARGE SCALE ANALYSIS] AT SER-257; THR-504; SER-512; SER-519; SER-521; SER-524; SER-567; SER-575; SER-660; THR-665 AND SER-668</scope>
    <scope>IDENTIFICATION BY MASS SPECTROMETRY [LARGE SCALE ANALYSIS]</scope>
    <source>
        <tissue>Brain</tissue>
        <tissue>Brown adipose tissue</tissue>
        <tissue>Heart</tissue>
        <tissue>Kidney</tissue>
        <tissue>Liver</tissue>
        <tissue>Lung</tissue>
        <tissue>Pancreas</tissue>
        <tissue>Spleen</tissue>
        <tissue>Testis</tissue>
    </source>
</reference>
<reference key="8">
    <citation type="journal article" date="2014" name="J. Dent. Res.">
        <title>STIM1 and SLC24A4 are critical for enamel maturation.</title>
        <authorList>
            <person name="Wang S."/>
            <person name="Choi M."/>
            <person name="Richardson A.S."/>
            <person name="Reid B.M."/>
            <person name="Seymen F."/>
            <person name="Yildirim M."/>
            <person name="Tuna E."/>
            <person name="Gencay K."/>
            <person name="Simmer J.P."/>
            <person name="Hu J.C."/>
        </authorList>
    </citation>
    <scope>TISSUE SPECIFICITY</scope>
</reference>
<reference key="9">
    <citation type="journal article" date="2015" name="Proc. Natl. Acad. Sci. U.S.A.">
        <title>Tmem178 acts in a novel negative feedback loop targeting NFATc1 to regulate bone mass.</title>
        <authorList>
            <person name="Decker C.E."/>
            <person name="Yang Z."/>
            <person name="Rimer R."/>
            <person name="Park-Min K.H."/>
            <person name="Macaubas C."/>
            <person name="Mellins E.D."/>
            <person name="Novack D.V."/>
            <person name="Faccio R."/>
        </authorList>
    </citation>
    <scope>INTERACTION WITH TMEM178A</scope>
</reference>
<reference key="10">
    <citation type="journal article" date="2019" name="Proc. Natl. Acad. Sci. U.S.A.">
        <title>TMEM203 is a binding partner and regulator of STING-mediated inflammatory signaling in macrophages.</title>
        <authorList>
            <person name="Li Y."/>
            <person name="James S.J."/>
            <person name="Wyllie D.H."/>
            <person name="Wynne C."/>
            <person name="Czibula A."/>
            <person name="Bukhari A."/>
            <person name="Pye K."/>
            <person name="Bte Mustafah S.M."/>
            <person name="Fajka-Boja R."/>
            <person name="Szabo E."/>
            <person name="Angyal A."/>
            <person name="Hegedus Z."/>
            <person name="Kovacs L."/>
            <person name="Hill A.V.S."/>
            <person name="Jefferies C.A."/>
            <person name="Wilson H.L."/>
            <person name="Yongliang Z."/>
            <person name="Kiss-Toth E."/>
        </authorList>
    </citation>
    <scope>INTERACTION WITH TMEM203</scope>
</reference>
<feature type="signal peptide" evidence="2">
    <location>
        <begin position="1"/>
        <end position="22"/>
    </location>
</feature>
<feature type="chain" id="PRO_0000033327" description="Stromal interaction molecule 1">
    <location>
        <begin position="23"/>
        <end position="685"/>
    </location>
</feature>
<feature type="topological domain" description="Extracellular" evidence="2">
    <location>
        <begin position="23"/>
        <end position="213"/>
    </location>
</feature>
<feature type="transmembrane region" description="Helical" evidence="2">
    <location>
        <begin position="214"/>
        <end position="234"/>
    </location>
</feature>
<feature type="topological domain" description="Cytoplasmic" evidence="2">
    <location>
        <begin position="235"/>
        <end position="685"/>
    </location>
</feature>
<feature type="domain" description="EF-hand 1" evidence="1">
    <location>
        <begin position="64"/>
        <end position="97"/>
    </location>
</feature>
<feature type="domain" description="EF-hand 2" evidence="1">
    <location>
        <begin position="102"/>
        <end position="126"/>
    </location>
</feature>
<feature type="domain" description="SAM" evidence="3">
    <location>
        <begin position="132"/>
        <end position="200"/>
    </location>
</feature>
<feature type="region of interest" description="Disordered" evidence="4">
    <location>
        <begin position="24"/>
        <end position="43"/>
    </location>
</feature>
<feature type="region of interest" description="SOAR/CAD" evidence="1">
    <location>
        <begin position="344"/>
        <end position="442"/>
    </location>
</feature>
<feature type="region of interest" description="Contributes to fast Ca(2+)-dependent inactivation of CRAC channels" evidence="1">
    <location>
        <begin position="475"/>
        <end position="483"/>
    </location>
</feature>
<feature type="region of interest" description="Disordered" evidence="4">
    <location>
        <begin position="490"/>
        <end position="541"/>
    </location>
</feature>
<feature type="region of interest" description="Disordered" evidence="4">
    <location>
        <begin position="596"/>
        <end position="685"/>
    </location>
</feature>
<feature type="region of interest" description="Required for generation of inwardly rectifying CRAC currents" evidence="1">
    <location>
        <begin position="672"/>
        <end position="685"/>
    </location>
</feature>
<feature type="coiled-coil region" evidence="1">
    <location>
        <begin position="248"/>
        <end position="442"/>
    </location>
</feature>
<feature type="short sequence motif" description="Microtubule tip localization signal" evidence="1">
    <location>
        <begin position="642"/>
        <end position="645"/>
    </location>
</feature>
<feature type="compositionally biased region" description="Low complexity" evidence="4">
    <location>
        <begin position="32"/>
        <end position="41"/>
    </location>
</feature>
<feature type="compositionally biased region" description="Low complexity" evidence="4">
    <location>
        <begin position="490"/>
        <end position="499"/>
    </location>
</feature>
<feature type="compositionally biased region" description="Basic and acidic residues" evidence="4">
    <location>
        <begin position="515"/>
        <end position="532"/>
    </location>
</feature>
<feature type="compositionally biased region" description="Low complexity" evidence="4">
    <location>
        <begin position="608"/>
        <end position="620"/>
    </location>
</feature>
<feature type="compositionally biased region" description="Acidic residues" evidence="4">
    <location>
        <begin position="655"/>
        <end position="666"/>
    </location>
</feature>
<feature type="compositionally biased region" description="Basic residues" evidence="4">
    <location>
        <begin position="670"/>
        <end position="685"/>
    </location>
</feature>
<feature type="binding site" evidence="1">
    <location>
        <position position="76"/>
    </location>
    <ligand>
        <name>Ca(2+)</name>
        <dbReference type="ChEBI" id="CHEBI:29108"/>
    </ligand>
</feature>
<feature type="binding site" evidence="1">
    <location>
        <position position="78"/>
    </location>
    <ligand>
        <name>Ca(2+)</name>
        <dbReference type="ChEBI" id="CHEBI:29108"/>
    </ligand>
</feature>
<feature type="binding site" evidence="1">
    <location>
        <position position="80"/>
    </location>
    <ligand>
        <name>Ca(2+)</name>
        <dbReference type="ChEBI" id="CHEBI:29108"/>
    </ligand>
</feature>
<feature type="binding site" evidence="1">
    <location>
        <position position="82"/>
    </location>
    <ligand>
        <name>Ca(2+)</name>
        <dbReference type="ChEBI" id="CHEBI:29108"/>
    </ligand>
</feature>
<feature type="binding site" evidence="1">
    <location>
        <position position="87"/>
    </location>
    <ligand>
        <name>Ca(2+)</name>
        <dbReference type="ChEBI" id="CHEBI:29108"/>
    </ligand>
</feature>
<feature type="modified residue" description="Phosphoserine" evidence="10 12">
    <location>
        <position position="257"/>
    </location>
</feature>
<feature type="modified residue" description="Phosphothreonine" evidence="11 12">
    <location>
        <position position="504"/>
    </location>
</feature>
<feature type="modified residue" description="Phosphoserine" evidence="11 12">
    <location>
        <position position="512"/>
    </location>
</feature>
<feature type="modified residue" description="Phosphothreonine" evidence="1">
    <location>
        <position position="517"/>
    </location>
</feature>
<feature type="modified residue" description="Phosphoserine" evidence="12">
    <location>
        <position position="519"/>
    </location>
</feature>
<feature type="modified residue" description="Phosphoserine" evidence="12">
    <location>
        <position position="521"/>
    </location>
</feature>
<feature type="modified residue" description="Phosphoserine" evidence="1">
    <location>
        <position position="523"/>
    </location>
</feature>
<feature type="modified residue" description="Phosphoserine" evidence="12">
    <location>
        <position position="524"/>
    </location>
</feature>
<feature type="modified residue" description="Phosphoserine" evidence="12">
    <location>
        <position position="567"/>
    </location>
</feature>
<feature type="modified residue" description="Phosphoserine" evidence="11 12">
    <location>
        <position position="575"/>
    </location>
</feature>
<feature type="modified residue" description="Phosphoserine" evidence="1">
    <location>
        <position position="602"/>
    </location>
</feature>
<feature type="modified residue" description="Phosphoserine" evidence="1">
    <location>
        <position position="608"/>
    </location>
</feature>
<feature type="modified residue" description="Phosphoserine" evidence="1">
    <location>
        <position position="618"/>
    </location>
</feature>
<feature type="modified residue" description="Phosphoserine" evidence="1">
    <location>
        <position position="621"/>
    </location>
</feature>
<feature type="modified residue" description="Phosphoserine" evidence="1">
    <location>
        <position position="628"/>
    </location>
</feature>
<feature type="modified residue" description="Phosphoserine" evidence="12">
    <location>
        <position position="660"/>
    </location>
</feature>
<feature type="modified residue" description="Phosphothreonine" evidence="12">
    <location>
        <position position="665"/>
    </location>
</feature>
<feature type="modified residue" description="Phosphoserine" evidence="12">
    <location>
        <position position="668"/>
    </location>
</feature>
<feature type="glycosylation site" description="N-linked (GlcNAc...) asparagine" evidence="1">
    <location>
        <position position="131"/>
    </location>
</feature>
<feature type="glycosylation site" description="N-linked (GlcNAc...) asparagine" evidence="1">
    <location>
        <position position="171"/>
    </location>
</feature>
<feature type="sequence conflict" description="In Ref. 1; AAC52715." evidence="9" ref="1">
    <original>A</original>
    <variation>S</variation>
    <location>
        <position position="331"/>
    </location>
</feature>
<proteinExistence type="evidence at protein level"/>
<protein>
    <recommendedName>
        <fullName>Stromal interaction molecule 1</fullName>
    </recommendedName>
</protein>
<accession>P70302</accession>
<accession>Q8K1E1</accession>
<gene>
    <name type="primary">Stim1</name>
    <name type="synonym">Sim</name>
</gene>
<name>STIM1_MOUSE</name>